<evidence type="ECO:0000255" key="1">
    <source>
        <dbReference type="HAMAP-Rule" id="MF_01187"/>
    </source>
</evidence>
<dbReference type="EMBL" id="BA000012">
    <property type="protein sequence ID" value="BAB51087.1"/>
    <property type="molecule type" value="Genomic_DNA"/>
</dbReference>
<dbReference type="RefSeq" id="WP_010912429.1">
    <property type="nucleotide sequence ID" value="NC_002678.2"/>
</dbReference>
<dbReference type="SMR" id="Q98E33"/>
<dbReference type="KEGG" id="mlo:msl4429"/>
<dbReference type="PATRIC" id="fig|266835.9.peg.3494"/>
<dbReference type="eggNOG" id="COG2835">
    <property type="taxonomic scope" value="Bacteria"/>
</dbReference>
<dbReference type="HOGENOM" id="CLU_155659_2_2_5"/>
<dbReference type="Proteomes" id="UP000000552">
    <property type="component" value="Chromosome"/>
</dbReference>
<dbReference type="GO" id="GO:0005829">
    <property type="term" value="C:cytosol"/>
    <property type="evidence" value="ECO:0007669"/>
    <property type="project" value="TreeGrafter"/>
</dbReference>
<dbReference type="FunFam" id="2.20.25.10:FF:000002">
    <property type="entry name" value="UPF0434 protein YcaR"/>
    <property type="match status" value="1"/>
</dbReference>
<dbReference type="Gene3D" id="2.20.25.10">
    <property type="match status" value="1"/>
</dbReference>
<dbReference type="HAMAP" id="MF_01187">
    <property type="entry name" value="UPF0434"/>
    <property type="match status" value="1"/>
</dbReference>
<dbReference type="InterPro" id="IPR005651">
    <property type="entry name" value="Trm112-like"/>
</dbReference>
<dbReference type="PANTHER" id="PTHR33505:SF4">
    <property type="entry name" value="PROTEIN PREY, MITOCHONDRIAL"/>
    <property type="match status" value="1"/>
</dbReference>
<dbReference type="PANTHER" id="PTHR33505">
    <property type="entry name" value="ZGC:162634"/>
    <property type="match status" value="1"/>
</dbReference>
<dbReference type="Pfam" id="PF03966">
    <property type="entry name" value="Trm112p"/>
    <property type="match status" value="1"/>
</dbReference>
<dbReference type="SUPFAM" id="SSF158997">
    <property type="entry name" value="Trm112p-like"/>
    <property type="match status" value="1"/>
</dbReference>
<feature type="chain" id="PRO_0000291146" description="UPF0434 protein msl4429">
    <location>
        <begin position="1"/>
        <end position="81"/>
    </location>
</feature>
<comment type="similarity">
    <text evidence="1">Belongs to the UPF0434 family.</text>
</comment>
<organism>
    <name type="scientific">Mesorhizobium japonicum (strain LMG 29417 / CECT 9101 / MAFF 303099)</name>
    <name type="common">Mesorhizobium loti (strain MAFF 303099)</name>
    <dbReference type="NCBI Taxonomy" id="266835"/>
    <lineage>
        <taxon>Bacteria</taxon>
        <taxon>Pseudomonadati</taxon>
        <taxon>Pseudomonadota</taxon>
        <taxon>Alphaproteobacteria</taxon>
        <taxon>Hyphomicrobiales</taxon>
        <taxon>Phyllobacteriaceae</taxon>
        <taxon>Mesorhizobium</taxon>
    </lineage>
</organism>
<name>Y4429_RHILO</name>
<protein>
    <recommendedName>
        <fullName evidence="1">UPF0434 protein msl4429</fullName>
    </recommendedName>
</protein>
<proteinExistence type="inferred from homology"/>
<sequence>MAADGRDGKKIDVDPKLLELLACPLTKGPLAWDPERGELISRVAKLAYPVRDGIPIMLPSEARTLSAEDVLAPPPRLSGPA</sequence>
<accession>Q98E33</accession>
<gene>
    <name type="ordered locus">msl4429</name>
</gene>
<reference key="1">
    <citation type="journal article" date="2000" name="DNA Res.">
        <title>Complete genome structure of the nitrogen-fixing symbiotic bacterium Mesorhizobium loti.</title>
        <authorList>
            <person name="Kaneko T."/>
            <person name="Nakamura Y."/>
            <person name="Sato S."/>
            <person name="Asamizu E."/>
            <person name="Kato T."/>
            <person name="Sasamoto S."/>
            <person name="Watanabe A."/>
            <person name="Idesawa K."/>
            <person name="Ishikawa A."/>
            <person name="Kawashima K."/>
            <person name="Kimura T."/>
            <person name="Kishida Y."/>
            <person name="Kiyokawa C."/>
            <person name="Kohara M."/>
            <person name="Matsumoto M."/>
            <person name="Matsuno A."/>
            <person name="Mochizuki Y."/>
            <person name="Nakayama S."/>
            <person name="Nakazaki N."/>
            <person name="Shimpo S."/>
            <person name="Sugimoto M."/>
            <person name="Takeuchi C."/>
            <person name="Yamada M."/>
            <person name="Tabata S."/>
        </authorList>
    </citation>
    <scope>NUCLEOTIDE SEQUENCE [LARGE SCALE GENOMIC DNA]</scope>
    <source>
        <strain>LMG 29417 / CECT 9101 / MAFF 303099</strain>
    </source>
</reference>